<protein>
    <recommendedName>
        <fullName evidence="1">DNA ligase</fullName>
        <ecNumber evidence="1">6.5.1.2</ecNumber>
    </recommendedName>
    <alternativeName>
        <fullName evidence="1">Polydeoxyribonucleotide synthase [NAD(+)]</fullName>
    </alternativeName>
</protein>
<reference key="1">
    <citation type="journal article" date="2009" name="BMC Genomics">
        <title>Pseudogene accumulation in the evolutionary histories of Salmonella enterica serovars Paratyphi A and Typhi.</title>
        <authorList>
            <person name="Holt K.E."/>
            <person name="Thomson N.R."/>
            <person name="Wain J."/>
            <person name="Langridge G.C."/>
            <person name="Hasan R."/>
            <person name="Bhutta Z.A."/>
            <person name="Quail M.A."/>
            <person name="Norbertczak H."/>
            <person name="Walker D."/>
            <person name="Simmonds M."/>
            <person name="White B."/>
            <person name="Bason N."/>
            <person name="Mungall K."/>
            <person name="Dougan G."/>
            <person name="Parkhill J."/>
        </authorList>
    </citation>
    <scope>NUCLEOTIDE SEQUENCE [LARGE SCALE GENOMIC DNA]</scope>
    <source>
        <strain>AKU_12601</strain>
    </source>
</reference>
<proteinExistence type="inferred from homology"/>
<keyword id="KW-0227">DNA damage</keyword>
<keyword id="KW-0234">DNA repair</keyword>
<keyword id="KW-0235">DNA replication</keyword>
<keyword id="KW-0436">Ligase</keyword>
<keyword id="KW-0460">Magnesium</keyword>
<keyword id="KW-0464">Manganese</keyword>
<keyword id="KW-0479">Metal-binding</keyword>
<keyword id="KW-0520">NAD</keyword>
<keyword id="KW-0862">Zinc</keyword>
<organism>
    <name type="scientific">Salmonella paratyphi A (strain AKU_12601)</name>
    <dbReference type="NCBI Taxonomy" id="554290"/>
    <lineage>
        <taxon>Bacteria</taxon>
        <taxon>Pseudomonadati</taxon>
        <taxon>Pseudomonadota</taxon>
        <taxon>Gammaproteobacteria</taxon>
        <taxon>Enterobacterales</taxon>
        <taxon>Enterobacteriaceae</taxon>
        <taxon>Salmonella</taxon>
    </lineage>
</organism>
<sequence>MEPIEQQLTELRTTLRHHEYLYHVMDAPEIPDAEYDRLMRELRELEAQRPDLITPDSPTQRVGAAPLTAFNQIRHEVPMLSLDNVFDEESFLAFNKRVQDRLKSTENVIWCCELKLDGLAVSILYENGVLVSAATRGDGTTGEDITSNVRTIRAIPLKLHGDNIPARLEVRGEVFLPQAGFEKINEDARRTGGKVFANPRNAAAGSLRQLDPRITAKRPLTFFCYGVGILEGGELPDTHLGRLLQFKAWGLPVSDRVTLCDSPQAVLDFYHNVEKDRPTLGFDIDGVVIKVNSLALQEQLGFVARAPRWAVAFKFPAQEQMTFVRDVEFQVGRTGAITPVARLEPVQVAGVLVSNATLHNADEIERLGLRIGDKVVIRRAGDVIPQVVNVVLSERPEETRPIVFPTHCPVCGSDVERVEGEAVTRCTGGLICGAQRKESLKHFVSRRAMDVDGMGDKIIDQLVEREYVHTPADLFRLTAGKLTGLDRMGPKSAQNVVNALEKAKATTFARFLYALGIREVGEATAAGLAAYFGTLEALQAATIDELQKVPDVGIVVATHVFNFFAEESNRDVIVQLLAEGVHWPAPVVINVQEIDSPFAGKTVVLTGSLSQMSRDDAKARLVALGAKVAGSVSKKTDLVIAGEAAGSKLAKAQELGINVIDEAEMIRLLGA</sequence>
<accession>B5BB72</accession>
<name>DNLJ_SALPK</name>
<feature type="chain" id="PRO_0000380467" description="DNA ligase">
    <location>
        <begin position="1"/>
        <end position="671"/>
    </location>
</feature>
<feature type="domain" description="BRCT" evidence="1">
    <location>
        <begin position="593"/>
        <end position="671"/>
    </location>
</feature>
<feature type="active site" description="N6-AMP-lysine intermediate" evidence="1">
    <location>
        <position position="115"/>
    </location>
</feature>
<feature type="binding site" evidence="1">
    <location>
        <begin position="32"/>
        <end position="36"/>
    </location>
    <ligand>
        <name>NAD(+)</name>
        <dbReference type="ChEBI" id="CHEBI:57540"/>
    </ligand>
</feature>
<feature type="binding site" evidence="1">
    <location>
        <begin position="81"/>
        <end position="82"/>
    </location>
    <ligand>
        <name>NAD(+)</name>
        <dbReference type="ChEBI" id="CHEBI:57540"/>
    </ligand>
</feature>
<feature type="binding site" evidence="1">
    <location>
        <position position="113"/>
    </location>
    <ligand>
        <name>NAD(+)</name>
        <dbReference type="ChEBI" id="CHEBI:57540"/>
    </ligand>
</feature>
<feature type="binding site" evidence="1">
    <location>
        <position position="136"/>
    </location>
    <ligand>
        <name>NAD(+)</name>
        <dbReference type="ChEBI" id="CHEBI:57540"/>
    </ligand>
</feature>
<feature type="binding site" evidence="1">
    <location>
        <position position="173"/>
    </location>
    <ligand>
        <name>NAD(+)</name>
        <dbReference type="ChEBI" id="CHEBI:57540"/>
    </ligand>
</feature>
<feature type="binding site" evidence="1">
    <location>
        <position position="290"/>
    </location>
    <ligand>
        <name>NAD(+)</name>
        <dbReference type="ChEBI" id="CHEBI:57540"/>
    </ligand>
</feature>
<feature type="binding site" evidence="1">
    <location>
        <position position="314"/>
    </location>
    <ligand>
        <name>NAD(+)</name>
        <dbReference type="ChEBI" id="CHEBI:57540"/>
    </ligand>
</feature>
<feature type="binding site" evidence="1">
    <location>
        <position position="408"/>
    </location>
    <ligand>
        <name>Zn(2+)</name>
        <dbReference type="ChEBI" id="CHEBI:29105"/>
    </ligand>
</feature>
<feature type="binding site" evidence="1">
    <location>
        <position position="411"/>
    </location>
    <ligand>
        <name>Zn(2+)</name>
        <dbReference type="ChEBI" id="CHEBI:29105"/>
    </ligand>
</feature>
<feature type="binding site" evidence="1">
    <location>
        <position position="426"/>
    </location>
    <ligand>
        <name>Zn(2+)</name>
        <dbReference type="ChEBI" id="CHEBI:29105"/>
    </ligand>
</feature>
<feature type="binding site" evidence="1">
    <location>
        <position position="432"/>
    </location>
    <ligand>
        <name>Zn(2+)</name>
        <dbReference type="ChEBI" id="CHEBI:29105"/>
    </ligand>
</feature>
<comment type="function">
    <text evidence="1">DNA ligase that catalyzes the formation of phosphodiester linkages between 5'-phosphoryl and 3'-hydroxyl groups in double-stranded DNA using NAD as a coenzyme and as the energy source for the reaction. It is essential for DNA replication and repair of damaged DNA.</text>
</comment>
<comment type="catalytic activity">
    <reaction evidence="1">
        <text>NAD(+) + (deoxyribonucleotide)n-3'-hydroxyl + 5'-phospho-(deoxyribonucleotide)m = (deoxyribonucleotide)n+m + AMP + beta-nicotinamide D-nucleotide.</text>
        <dbReference type="EC" id="6.5.1.2"/>
    </reaction>
</comment>
<comment type="cofactor">
    <cofactor evidence="1">
        <name>Mg(2+)</name>
        <dbReference type="ChEBI" id="CHEBI:18420"/>
    </cofactor>
    <cofactor evidence="1">
        <name>Mn(2+)</name>
        <dbReference type="ChEBI" id="CHEBI:29035"/>
    </cofactor>
</comment>
<comment type="similarity">
    <text evidence="1">Belongs to the NAD-dependent DNA ligase family. LigA subfamily.</text>
</comment>
<dbReference type="EC" id="6.5.1.2" evidence="1"/>
<dbReference type="EMBL" id="FM200053">
    <property type="protein sequence ID" value="CAR58535.1"/>
    <property type="molecule type" value="Genomic_DNA"/>
</dbReference>
<dbReference type="RefSeq" id="WP_000433272.1">
    <property type="nucleotide sequence ID" value="NC_011147.1"/>
</dbReference>
<dbReference type="SMR" id="B5BB72"/>
<dbReference type="KEGG" id="sek:SSPA0411"/>
<dbReference type="HOGENOM" id="CLU_007764_2_1_6"/>
<dbReference type="Proteomes" id="UP000001869">
    <property type="component" value="Chromosome"/>
</dbReference>
<dbReference type="GO" id="GO:0005829">
    <property type="term" value="C:cytosol"/>
    <property type="evidence" value="ECO:0007669"/>
    <property type="project" value="TreeGrafter"/>
</dbReference>
<dbReference type="GO" id="GO:0003677">
    <property type="term" value="F:DNA binding"/>
    <property type="evidence" value="ECO:0007669"/>
    <property type="project" value="InterPro"/>
</dbReference>
<dbReference type="GO" id="GO:0003911">
    <property type="term" value="F:DNA ligase (NAD+) activity"/>
    <property type="evidence" value="ECO:0007669"/>
    <property type="project" value="UniProtKB-UniRule"/>
</dbReference>
<dbReference type="GO" id="GO:0046872">
    <property type="term" value="F:metal ion binding"/>
    <property type="evidence" value="ECO:0007669"/>
    <property type="project" value="UniProtKB-KW"/>
</dbReference>
<dbReference type="GO" id="GO:0006281">
    <property type="term" value="P:DNA repair"/>
    <property type="evidence" value="ECO:0007669"/>
    <property type="project" value="UniProtKB-KW"/>
</dbReference>
<dbReference type="GO" id="GO:0006260">
    <property type="term" value="P:DNA replication"/>
    <property type="evidence" value="ECO:0007669"/>
    <property type="project" value="UniProtKB-KW"/>
</dbReference>
<dbReference type="CDD" id="cd17748">
    <property type="entry name" value="BRCT_DNA_ligase_like"/>
    <property type="match status" value="1"/>
</dbReference>
<dbReference type="CDD" id="cd00114">
    <property type="entry name" value="LIGANc"/>
    <property type="match status" value="1"/>
</dbReference>
<dbReference type="FunFam" id="1.10.150.20:FF:000006">
    <property type="entry name" value="DNA ligase"/>
    <property type="match status" value="1"/>
</dbReference>
<dbReference type="FunFam" id="1.10.150.20:FF:000007">
    <property type="entry name" value="DNA ligase"/>
    <property type="match status" value="1"/>
</dbReference>
<dbReference type="FunFam" id="1.10.287.610:FF:000002">
    <property type="entry name" value="DNA ligase"/>
    <property type="match status" value="1"/>
</dbReference>
<dbReference type="FunFam" id="2.40.50.140:FF:000012">
    <property type="entry name" value="DNA ligase"/>
    <property type="match status" value="1"/>
</dbReference>
<dbReference type="FunFam" id="3.30.470.30:FF:000001">
    <property type="entry name" value="DNA ligase"/>
    <property type="match status" value="1"/>
</dbReference>
<dbReference type="FunFam" id="3.40.50.10190:FF:000004">
    <property type="entry name" value="DNA ligase"/>
    <property type="match status" value="1"/>
</dbReference>
<dbReference type="FunFam" id="6.20.10.30:FF:000001">
    <property type="entry name" value="DNA ligase"/>
    <property type="match status" value="1"/>
</dbReference>
<dbReference type="Gene3D" id="6.20.10.30">
    <property type="match status" value="1"/>
</dbReference>
<dbReference type="Gene3D" id="1.10.150.20">
    <property type="entry name" value="5' to 3' exonuclease, C-terminal subdomain"/>
    <property type="match status" value="2"/>
</dbReference>
<dbReference type="Gene3D" id="3.40.50.10190">
    <property type="entry name" value="BRCT domain"/>
    <property type="match status" value="1"/>
</dbReference>
<dbReference type="Gene3D" id="3.30.470.30">
    <property type="entry name" value="DNA ligase/mRNA capping enzyme"/>
    <property type="match status" value="1"/>
</dbReference>
<dbReference type="Gene3D" id="1.10.287.610">
    <property type="entry name" value="Helix hairpin bin"/>
    <property type="match status" value="1"/>
</dbReference>
<dbReference type="Gene3D" id="2.40.50.140">
    <property type="entry name" value="Nucleic acid-binding proteins"/>
    <property type="match status" value="1"/>
</dbReference>
<dbReference type="HAMAP" id="MF_01588">
    <property type="entry name" value="DNA_ligase_A"/>
    <property type="match status" value="1"/>
</dbReference>
<dbReference type="InterPro" id="IPR001357">
    <property type="entry name" value="BRCT_dom"/>
</dbReference>
<dbReference type="InterPro" id="IPR036420">
    <property type="entry name" value="BRCT_dom_sf"/>
</dbReference>
<dbReference type="InterPro" id="IPR041663">
    <property type="entry name" value="DisA/LigA_HHH"/>
</dbReference>
<dbReference type="InterPro" id="IPR001679">
    <property type="entry name" value="DNA_ligase"/>
</dbReference>
<dbReference type="InterPro" id="IPR018239">
    <property type="entry name" value="DNA_ligase_AS"/>
</dbReference>
<dbReference type="InterPro" id="IPR033136">
    <property type="entry name" value="DNA_ligase_CS"/>
</dbReference>
<dbReference type="InterPro" id="IPR013839">
    <property type="entry name" value="DNAligase_adenylation"/>
</dbReference>
<dbReference type="InterPro" id="IPR013840">
    <property type="entry name" value="DNAligase_N"/>
</dbReference>
<dbReference type="InterPro" id="IPR003583">
    <property type="entry name" value="Hlx-hairpin-Hlx_DNA-bd_motif"/>
</dbReference>
<dbReference type="InterPro" id="IPR012340">
    <property type="entry name" value="NA-bd_OB-fold"/>
</dbReference>
<dbReference type="InterPro" id="IPR004150">
    <property type="entry name" value="NAD_DNA_ligase_OB"/>
</dbReference>
<dbReference type="InterPro" id="IPR010994">
    <property type="entry name" value="RuvA_2-like"/>
</dbReference>
<dbReference type="InterPro" id="IPR004149">
    <property type="entry name" value="Znf_DNAligase_C4"/>
</dbReference>
<dbReference type="NCBIfam" id="TIGR00575">
    <property type="entry name" value="dnlj"/>
    <property type="match status" value="1"/>
</dbReference>
<dbReference type="NCBIfam" id="NF005932">
    <property type="entry name" value="PRK07956.1"/>
    <property type="match status" value="1"/>
</dbReference>
<dbReference type="PANTHER" id="PTHR23389">
    <property type="entry name" value="CHROMOSOME TRANSMISSION FIDELITY FACTOR 18"/>
    <property type="match status" value="1"/>
</dbReference>
<dbReference type="PANTHER" id="PTHR23389:SF9">
    <property type="entry name" value="DNA LIGASE"/>
    <property type="match status" value="1"/>
</dbReference>
<dbReference type="Pfam" id="PF00533">
    <property type="entry name" value="BRCT"/>
    <property type="match status" value="1"/>
</dbReference>
<dbReference type="Pfam" id="PF01653">
    <property type="entry name" value="DNA_ligase_aden"/>
    <property type="match status" value="1"/>
</dbReference>
<dbReference type="Pfam" id="PF03120">
    <property type="entry name" value="DNA_ligase_OB"/>
    <property type="match status" value="1"/>
</dbReference>
<dbReference type="Pfam" id="PF03119">
    <property type="entry name" value="DNA_ligase_ZBD"/>
    <property type="match status" value="1"/>
</dbReference>
<dbReference type="Pfam" id="PF12826">
    <property type="entry name" value="HHH_2"/>
    <property type="match status" value="1"/>
</dbReference>
<dbReference type="Pfam" id="PF14520">
    <property type="entry name" value="HHH_5"/>
    <property type="match status" value="1"/>
</dbReference>
<dbReference type="Pfam" id="PF22745">
    <property type="entry name" value="Nlig-Ia"/>
    <property type="match status" value="1"/>
</dbReference>
<dbReference type="PIRSF" id="PIRSF001604">
    <property type="entry name" value="LigA"/>
    <property type="match status" value="1"/>
</dbReference>
<dbReference type="SMART" id="SM00292">
    <property type="entry name" value="BRCT"/>
    <property type="match status" value="1"/>
</dbReference>
<dbReference type="SMART" id="SM00278">
    <property type="entry name" value="HhH1"/>
    <property type="match status" value="4"/>
</dbReference>
<dbReference type="SMART" id="SM00532">
    <property type="entry name" value="LIGANc"/>
    <property type="match status" value="1"/>
</dbReference>
<dbReference type="SUPFAM" id="SSF52113">
    <property type="entry name" value="BRCT domain"/>
    <property type="match status" value="1"/>
</dbReference>
<dbReference type="SUPFAM" id="SSF56091">
    <property type="entry name" value="DNA ligase/mRNA capping enzyme, catalytic domain"/>
    <property type="match status" value="1"/>
</dbReference>
<dbReference type="SUPFAM" id="SSF50249">
    <property type="entry name" value="Nucleic acid-binding proteins"/>
    <property type="match status" value="1"/>
</dbReference>
<dbReference type="SUPFAM" id="SSF47781">
    <property type="entry name" value="RuvA domain 2-like"/>
    <property type="match status" value="1"/>
</dbReference>
<dbReference type="PROSITE" id="PS50172">
    <property type="entry name" value="BRCT"/>
    <property type="match status" value="1"/>
</dbReference>
<dbReference type="PROSITE" id="PS01055">
    <property type="entry name" value="DNA_LIGASE_N1"/>
    <property type="match status" value="1"/>
</dbReference>
<dbReference type="PROSITE" id="PS01056">
    <property type="entry name" value="DNA_LIGASE_N2"/>
    <property type="match status" value="1"/>
</dbReference>
<gene>
    <name evidence="1" type="primary">ligA</name>
    <name type="ordered locus">SSPA0411</name>
</gene>
<evidence type="ECO:0000255" key="1">
    <source>
        <dbReference type="HAMAP-Rule" id="MF_01588"/>
    </source>
</evidence>